<gene>
    <name type="primary">ilvE</name>
    <name type="ordered locus">b3770</name>
    <name type="ordered locus">JW5606</name>
</gene>
<accession>P0AB80</accession>
<accession>P00510</accession>
<accession>Q2M879</accession>
<accession>Q47299</accession>
<proteinExistence type="evidence at protein level"/>
<dbReference type="EC" id="2.6.1.42"/>
<dbReference type="EMBL" id="X02413">
    <property type="protein sequence ID" value="CAA26262.1"/>
    <property type="molecule type" value="Genomic_DNA"/>
</dbReference>
<dbReference type="EMBL" id="M32253">
    <property type="protein sequence ID" value="AAA24022.1"/>
    <property type="molecule type" value="Genomic_DNA"/>
</dbReference>
<dbReference type="EMBL" id="M10313">
    <property type="protein sequence ID" value="AAB59052.1"/>
    <property type="molecule type" value="Genomic_DNA"/>
</dbReference>
<dbReference type="EMBL" id="X04890">
    <property type="protein sequence ID" value="CAA28575.1"/>
    <property type="molecule type" value="Genomic_DNA"/>
</dbReference>
<dbReference type="EMBL" id="M87049">
    <property type="protein sequence ID" value="AAA67573.1"/>
    <property type="molecule type" value="Genomic_DNA"/>
</dbReference>
<dbReference type="EMBL" id="U00096">
    <property type="protein sequence ID" value="AAT48207.1"/>
    <property type="molecule type" value="Genomic_DNA"/>
</dbReference>
<dbReference type="EMBL" id="AP009048">
    <property type="protein sequence ID" value="BAE77527.1"/>
    <property type="molecule type" value="Genomic_DNA"/>
</dbReference>
<dbReference type="EMBL" id="V00290">
    <property type="protein sequence ID" value="CAA23559.1"/>
    <property type="molecule type" value="Genomic_DNA"/>
</dbReference>
<dbReference type="PIR" id="E65180">
    <property type="entry name" value="XNECV"/>
</dbReference>
<dbReference type="RefSeq" id="WP_000208520.1">
    <property type="nucleotide sequence ID" value="NZ_STEB01000021.1"/>
</dbReference>
<dbReference type="RefSeq" id="YP_026247.1">
    <property type="nucleotide sequence ID" value="NC_000913.3"/>
</dbReference>
<dbReference type="PDB" id="1A3G">
    <property type="method" value="X-ray"/>
    <property type="resolution" value="2.50 A"/>
    <property type="chains" value="A/B/C=2-309"/>
</dbReference>
<dbReference type="PDB" id="1I1K">
    <property type="method" value="X-ray"/>
    <property type="resolution" value="2.10 A"/>
    <property type="chains" value="A/B/C=1-309"/>
</dbReference>
<dbReference type="PDB" id="1I1L">
    <property type="method" value="X-ray"/>
    <property type="resolution" value="2.40 A"/>
    <property type="chains" value="A/B/C=1-309"/>
</dbReference>
<dbReference type="PDB" id="1I1M">
    <property type="method" value="X-ray"/>
    <property type="resolution" value="2.40 A"/>
    <property type="chains" value="A/B/C=1-309"/>
</dbReference>
<dbReference type="PDB" id="1IYD">
    <property type="method" value="X-ray"/>
    <property type="resolution" value="2.15 A"/>
    <property type="chains" value="A/B/C=1-309"/>
</dbReference>
<dbReference type="PDB" id="1IYE">
    <property type="method" value="X-ray"/>
    <property type="resolution" value="1.82 A"/>
    <property type="chains" value="A/B/C=1-309"/>
</dbReference>
<dbReference type="PDBsum" id="1A3G"/>
<dbReference type="PDBsum" id="1I1K"/>
<dbReference type="PDBsum" id="1I1L"/>
<dbReference type="PDBsum" id="1I1M"/>
<dbReference type="PDBsum" id="1IYD"/>
<dbReference type="PDBsum" id="1IYE"/>
<dbReference type="SMR" id="P0AB80"/>
<dbReference type="BioGRID" id="4261272">
    <property type="interactions" value="73"/>
</dbReference>
<dbReference type="DIP" id="DIP-10022N"/>
<dbReference type="FunCoup" id="P0AB80">
    <property type="interactions" value="703"/>
</dbReference>
<dbReference type="STRING" id="511145.b3770"/>
<dbReference type="DrugBank" id="DB04063">
    <property type="generic name" value="alpha-Methylleucine"/>
</dbReference>
<dbReference type="DrugBank" id="DB03553">
    <property type="generic name" value="Glutaric Acid"/>
</dbReference>
<dbReference type="DrugBank" id="DB03993">
    <property type="generic name" value="Isocaproic acid"/>
</dbReference>
<dbReference type="DrugBank" id="DB01813">
    <property type="generic name" value="Pyridoxyl-Glutamic Acid-5'-Monophosphate"/>
</dbReference>
<dbReference type="jPOST" id="P0AB80"/>
<dbReference type="PaxDb" id="511145-b3770"/>
<dbReference type="EnsemblBacteria" id="AAT48207">
    <property type="protein sequence ID" value="AAT48207"/>
    <property type="gene ID" value="b3770"/>
</dbReference>
<dbReference type="GeneID" id="75204761"/>
<dbReference type="GeneID" id="948278"/>
<dbReference type="KEGG" id="ecj:JW5606"/>
<dbReference type="KEGG" id="eco:b3770"/>
<dbReference type="KEGG" id="ecoc:C3026_20420"/>
<dbReference type="PATRIC" id="fig|511145.12.peg.3887"/>
<dbReference type="EchoBASE" id="EB0492"/>
<dbReference type="eggNOG" id="COG0115">
    <property type="taxonomic scope" value="Bacteria"/>
</dbReference>
<dbReference type="HOGENOM" id="CLU_020844_3_1_6"/>
<dbReference type="InParanoid" id="P0AB80"/>
<dbReference type="OMA" id="LTEVFAC"/>
<dbReference type="OrthoDB" id="21319at2"/>
<dbReference type="PhylomeDB" id="P0AB80"/>
<dbReference type="BioCyc" id="EcoCyc:BRANCHED-CHAINAMINOTRANSFER-MONOMER"/>
<dbReference type="BioCyc" id="MetaCyc:BRANCHED-CHAINAMINOTRANSFER-MONOMER"/>
<dbReference type="BRENDA" id="2.6.1.42">
    <property type="organism ID" value="2026"/>
</dbReference>
<dbReference type="UniPathway" id="UPA00047">
    <property type="reaction ID" value="UER00058"/>
</dbReference>
<dbReference type="UniPathway" id="UPA00048">
    <property type="reaction ID" value="UER00073"/>
</dbReference>
<dbReference type="UniPathway" id="UPA00049">
    <property type="reaction ID" value="UER00062"/>
</dbReference>
<dbReference type="EvolutionaryTrace" id="P0AB80"/>
<dbReference type="PRO" id="PR:P0AB80"/>
<dbReference type="Proteomes" id="UP000000625">
    <property type="component" value="Chromosome"/>
</dbReference>
<dbReference type="GO" id="GO:0005829">
    <property type="term" value="C:cytosol"/>
    <property type="evidence" value="ECO:0000314"/>
    <property type="project" value="EcoCyc"/>
</dbReference>
<dbReference type="GO" id="GO:0004084">
    <property type="term" value="F:branched-chain-amino-acid transaminase activity"/>
    <property type="evidence" value="ECO:0000314"/>
    <property type="project" value="EcoCyc"/>
</dbReference>
<dbReference type="GO" id="GO:0042802">
    <property type="term" value="F:identical protein binding"/>
    <property type="evidence" value="ECO:0000314"/>
    <property type="project" value="EcoCyc"/>
</dbReference>
<dbReference type="GO" id="GO:0052656">
    <property type="term" value="F:L-isoleucine-2-oxoglutarate transaminase activity"/>
    <property type="evidence" value="ECO:0007669"/>
    <property type="project" value="RHEA"/>
</dbReference>
<dbReference type="GO" id="GO:0052654">
    <property type="term" value="F:L-leucine-2-oxoglutarate transaminase activity"/>
    <property type="evidence" value="ECO:0007669"/>
    <property type="project" value="RHEA"/>
</dbReference>
<dbReference type="GO" id="GO:0052655">
    <property type="term" value="F:L-valine-2-oxoglutarate transaminase activity"/>
    <property type="evidence" value="ECO:0007669"/>
    <property type="project" value="RHEA"/>
</dbReference>
<dbReference type="GO" id="GO:0006532">
    <property type="term" value="P:aspartate biosynthetic process"/>
    <property type="evidence" value="ECO:0000316"/>
    <property type="project" value="EcoliWiki"/>
</dbReference>
<dbReference type="GO" id="GO:0009097">
    <property type="term" value="P:isoleucine biosynthetic process"/>
    <property type="evidence" value="ECO:0007669"/>
    <property type="project" value="UniProtKB-UniPathway"/>
</dbReference>
<dbReference type="GO" id="GO:0009098">
    <property type="term" value="P:L-leucine biosynthetic process"/>
    <property type="evidence" value="ECO:0000314"/>
    <property type="project" value="EcoCyc"/>
</dbReference>
<dbReference type="GO" id="GO:0009099">
    <property type="term" value="P:L-valine biosynthetic process"/>
    <property type="evidence" value="ECO:0000314"/>
    <property type="project" value="EcoCyc"/>
</dbReference>
<dbReference type="CDD" id="cd01557">
    <property type="entry name" value="BCAT_beta_family"/>
    <property type="match status" value="1"/>
</dbReference>
<dbReference type="FunFam" id="3.20.10.10:FF:000001">
    <property type="entry name" value="Branched-chain-amino-acid aminotransferase"/>
    <property type="match status" value="1"/>
</dbReference>
<dbReference type="FunFam" id="3.30.470.10:FF:000001">
    <property type="entry name" value="Branched-chain-amino-acid aminotransferase"/>
    <property type="match status" value="1"/>
</dbReference>
<dbReference type="Gene3D" id="3.30.470.10">
    <property type="match status" value="1"/>
</dbReference>
<dbReference type="Gene3D" id="3.20.10.10">
    <property type="entry name" value="D-amino Acid Aminotransferase, subunit A, domain 2"/>
    <property type="match status" value="1"/>
</dbReference>
<dbReference type="InterPro" id="IPR001544">
    <property type="entry name" value="Aminotrans_IV"/>
</dbReference>
<dbReference type="InterPro" id="IPR018300">
    <property type="entry name" value="Aminotrans_IV_CS"/>
</dbReference>
<dbReference type="InterPro" id="IPR036038">
    <property type="entry name" value="Aminotransferase-like"/>
</dbReference>
<dbReference type="InterPro" id="IPR005785">
    <property type="entry name" value="B_amino_transI"/>
</dbReference>
<dbReference type="InterPro" id="IPR043132">
    <property type="entry name" value="BCAT-like_C"/>
</dbReference>
<dbReference type="InterPro" id="IPR043131">
    <property type="entry name" value="BCAT-like_N"/>
</dbReference>
<dbReference type="InterPro" id="IPR033939">
    <property type="entry name" value="BCAT_family"/>
</dbReference>
<dbReference type="InterPro" id="IPR050571">
    <property type="entry name" value="Class-IV_PLP-Dep_Aminotrnsfr"/>
</dbReference>
<dbReference type="NCBIfam" id="TIGR01122">
    <property type="entry name" value="ilvE_I"/>
    <property type="match status" value="1"/>
</dbReference>
<dbReference type="NCBIfam" id="NF005146">
    <property type="entry name" value="PRK06606.1"/>
    <property type="match status" value="1"/>
</dbReference>
<dbReference type="PANTHER" id="PTHR42743">
    <property type="entry name" value="AMINO-ACID AMINOTRANSFERASE"/>
    <property type="match status" value="1"/>
</dbReference>
<dbReference type="PANTHER" id="PTHR42743:SF11">
    <property type="entry name" value="AMINODEOXYCHORISMATE LYASE"/>
    <property type="match status" value="1"/>
</dbReference>
<dbReference type="Pfam" id="PF01063">
    <property type="entry name" value="Aminotran_4"/>
    <property type="match status" value="1"/>
</dbReference>
<dbReference type="SUPFAM" id="SSF56752">
    <property type="entry name" value="D-aminoacid aminotransferase-like PLP-dependent enzymes"/>
    <property type="match status" value="1"/>
</dbReference>
<dbReference type="PROSITE" id="PS00770">
    <property type="entry name" value="AA_TRANSFER_CLASS_4"/>
    <property type="match status" value="1"/>
</dbReference>
<sequence>MTTKKADYIWFNGEMVRWEDAKVHVMSHALHYGTSVFEGIRCYDSHKGPVVFRHREHMQRLHDSAKIYRFPVSQSIDELMEACRDVIRKNNLTSAYIRPLIFVGDVGMGVNPPAGYSTDVIIAAFPWGAYLGAEALEQGIDAMVSSWNRAAPNTIPTAAKAGGNYLSSLLVGSEARRHGYQEGIALDVNGYISEGAGENLFEVKDGVLFTPPFTSSALPGITRDAIIKLAKELGIEVREQVLSRESLYLADEVFMSGTAAEITPVRSVDGIQVGEGRCGPVTKRIQQAFFGLFTGETEDKWGWLDQVNQ</sequence>
<organism>
    <name type="scientific">Escherichia coli (strain K12)</name>
    <dbReference type="NCBI Taxonomy" id="83333"/>
    <lineage>
        <taxon>Bacteria</taxon>
        <taxon>Pseudomonadati</taxon>
        <taxon>Pseudomonadota</taxon>
        <taxon>Gammaproteobacteria</taxon>
        <taxon>Enterobacterales</taxon>
        <taxon>Enterobacteriaceae</taxon>
        <taxon>Escherichia</taxon>
    </lineage>
</organism>
<comment type="function">
    <text>Acts on leucine, isoleucine and valine.</text>
</comment>
<comment type="catalytic activity">
    <reaction>
        <text>L-leucine + 2-oxoglutarate = 4-methyl-2-oxopentanoate + L-glutamate</text>
        <dbReference type="Rhea" id="RHEA:18321"/>
        <dbReference type="ChEBI" id="CHEBI:16810"/>
        <dbReference type="ChEBI" id="CHEBI:17865"/>
        <dbReference type="ChEBI" id="CHEBI:29985"/>
        <dbReference type="ChEBI" id="CHEBI:57427"/>
        <dbReference type="EC" id="2.6.1.42"/>
    </reaction>
</comment>
<comment type="catalytic activity">
    <reaction>
        <text>L-isoleucine + 2-oxoglutarate = (S)-3-methyl-2-oxopentanoate + L-glutamate</text>
        <dbReference type="Rhea" id="RHEA:24801"/>
        <dbReference type="ChEBI" id="CHEBI:16810"/>
        <dbReference type="ChEBI" id="CHEBI:29985"/>
        <dbReference type="ChEBI" id="CHEBI:35146"/>
        <dbReference type="ChEBI" id="CHEBI:58045"/>
        <dbReference type="EC" id="2.6.1.42"/>
    </reaction>
</comment>
<comment type="catalytic activity">
    <reaction>
        <text>L-valine + 2-oxoglutarate = 3-methyl-2-oxobutanoate + L-glutamate</text>
        <dbReference type="Rhea" id="RHEA:24813"/>
        <dbReference type="ChEBI" id="CHEBI:11851"/>
        <dbReference type="ChEBI" id="CHEBI:16810"/>
        <dbReference type="ChEBI" id="CHEBI:29985"/>
        <dbReference type="ChEBI" id="CHEBI:57762"/>
        <dbReference type="EC" id="2.6.1.42"/>
    </reaction>
</comment>
<comment type="cofactor">
    <cofactor>
        <name>pyridoxal 5'-phosphate</name>
        <dbReference type="ChEBI" id="CHEBI:597326"/>
    </cofactor>
</comment>
<comment type="pathway">
    <text>Amino-acid biosynthesis; L-isoleucine biosynthesis; L-isoleucine from 2-oxobutanoate: step 4/4.</text>
</comment>
<comment type="pathway">
    <text>Amino-acid biosynthesis; L-leucine biosynthesis; L-leucine from 3-methyl-2-oxobutanoate: step 4/4.</text>
</comment>
<comment type="pathway">
    <text>Amino-acid biosynthesis; L-valine biosynthesis; L-valine from pyruvate: step 4/4.</text>
</comment>
<comment type="subunit">
    <text>Homohexamer.</text>
</comment>
<comment type="similarity">
    <text evidence="1">Belongs to the class-IV pyridoxal-phosphate-dependent aminotransferase family.</text>
</comment>
<evidence type="ECO:0000305" key="1"/>
<evidence type="ECO:0007829" key="2">
    <source>
        <dbReference type="PDB" id="1I1K"/>
    </source>
</evidence>
<evidence type="ECO:0007829" key="3">
    <source>
        <dbReference type="PDB" id="1I1L"/>
    </source>
</evidence>
<evidence type="ECO:0007829" key="4">
    <source>
        <dbReference type="PDB" id="1IYE"/>
    </source>
</evidence>
<protein>
    <recommendedName>
        <fullName>Branched-chain-amino-acid aminotransferase</fullName>
        <shortName>BCAT</shortName>
        <ecNumber>2.6.1.42</ecNumber>
    </recommendedName>
    <alternativeName>
        <fullName>Transaminase B</fullName>
    </alternativeName>
</protein>
<keyword id="KW-0002">3D-structure</keyword>
<keyword id="KW-0028">Amino-acid biosynthesis</keyword>
<keyword id="KW-0032">Aminotransferase</keyword>
<keyword id="KW-0100">Branched-chain amino acid biosynthesis</keyword>
<keyword id="KW-0663">Pyridoxal phosphate</keyword>
<keyword id="KW-1185">Reference proteome</keyword>
<keyword id="KW-0808">Transferase</keyword>
<reference key="1">
    <citation type="journal article" date="1985" name="J. Biochem.">
        <title>Branched-chain amino acid aminotransferase of Escherichia coli: nucleotide sequence of the ilvE gene and the deduced amino acid sequence.</title>
        <authorList>
            <person name="Kuramitsu S."/>
            <person name="Ogawa T."/>
            <person name="Ogawa H."/>
            <person name="Kagamiyama H."/>
        </authorList>
    </citation>
    <scope>NUCLEOTIDE SEQUENCE [GENOMIC DNA]</scope>
    <source>
        <strain>K12</strain>
    </source>
</reference>
<reference key="2">
    <citation type="journal article" date="1987" name="Nucleic Acids Res.">
        <title>The complete nucleotide sequence of the ilvGMEDA operon of Escherichia coli K-12.</title>
        <authorList>
            <person name="Lawther R.P."/>
            <person name="Wek R.C."/>
            <person name="Lopes J.M."/>
            <person name="Pereira R."/>
            <person name="Taillon B.E."/>
            <person name="Hatfield G.W."/>
        </authorList>
    </citation>
    <scope>NUCLEOTIDE SEQUENCE [GENOMIC DNA]</scope>
    <source>
        <strain>K12</strain>
    </source>
</reference>
<reference key="3">
    <citation type="journal article" date="1992" name="Science">
        <title>Analysis of the Escherichia coli genome: DNA sequence of the region from 84.5 to 86.5 minutes.</title>
        <authorList>
            <person name="Daniels D.L."/>
            <person name="Plunkett G. III"/>
            <person name="Burland V.D."/>
            <person name="Blattner F.R."/>
        </authorList>
    </citation>
    <scope>NUCLEOTIDE SEQUENCE [LARGE SCALE GENOMIC DNA]</scope>
    <source>
        <strain>K12 / MG1655 / ATCC 47076</strain>
    </source>
</reference>
<reference key="4">
    <citation type="journal article" date="1997" name="Science">
        <title>The complete genome sequence of Escherichia coli K-12.</title>
        <authorList>
            <person name="Blattner F.R."/>
            <person name="Plunkett G. III"/>
            <person name="Bloch C.A."/>
            <person name="Perna N.T."/>
            <person name="Burland V."/>
            <person name="Riley M."/>
            <person name="Collado-Vides J."/>
            <person name="Glasner J.D."/>
            <person name="Rode C.K."/>
            <person name="Mayhew G.F."/>
            <person name="Gregor J."/>
            <person name="Davis N.W."/>
            <person name="Kirkpatrick H.A."/>
            <person name="Goeden M.A."/>
            <person name="Rose D.J."/>
            <person name="Mau B."/>
            <person name="Shao Y."/>
        </authorList>
    </citation>
    <scope>NUCLEOTIDE SEQUENCE [LARGE SCALE GENOMIC DNA]</scope>
    <source>
        <strain>K12 / MG1655 / ATCC 47076</strain>
    </source>
</reference>
<reference key="5">
    <citation type="journal article" date="2006" name="Nucleic Acids Res.">
        <title>Escherichia coli K-12: a cooperatively developed annotation snapshot -- 2005.</title>
        <authorList>
            <person name="Riley M."/>
            <person name="Abe T."/>
            <person name="Arnaud M.B."/>
            <person name="Berlyn M.K.B."/>
            <person name="Blattner F.R."/>
            <person name="Chaudhuri R.R."/>
            <person name="Glasner J.D."/>
            <person name="Horiuchi T."/>
            <person name="Keseler I.M."/>
            <person name="Kosuge T."/>
            <person name="Mori H."/>
            <person name="Perna N.T."/>
            <person name="Plunkett G. III"/>
            <person name="Rudd K.E."/>
            <person name="Serres M.H."/>
            <person name="Thomas G.H."/>
            <person name="Thomson N.R."/>
            <person name="Wishart D."/>
            <person name="Wanner B.L."/>
        </authorList>
    </citation>
    <scope>SEQUENCE REVISION TO 151</scope>
</reference>
<reference key="6">
    <citation type="journal article" date="2006" name="Mol. Syst. Biol.">
        <title>Highly accurate genome sequences of Escherichia coli K-12 strains MG1655 and W3110.</title>
        <authorList>
            <person name="Hayashi K."/>
            <person name="Morooka N."/>
            <person name="Yamamoto Y."/>
            <person name="Fujita K."/>
            <person name="Isono K."/>
            <person name="Choi S."/>
            <person name="Ohtsubo E."/>
            <person name="Baba T."/>
            <person name="Wanner B.L."/>
            <person name="Mori H."/>
            <person name="Horiuchi T."/>
        </authorList>
    </citation>
    <scope>NUCLEOTIDE SEQUENCE [LARGE SCALE GENOMIC DNA]</scope>
    <source>
        <strain>K12 / W3110 / ATCC 27325 / DSM 5911</strain>
    </source>
</reference>
<reference key="7">
    <citation type="journal article" date="1979" name="Nucleic Acids Res.">
        <title>The nucleotide sequence preceding and including the beginning of the ilvE gene of the ilvGEDA operon of Escherichia coli K12.</title>
        <authorList>
            <person name="Lawther R.P."/>
            <person name="Nichols B.P."/>
            <person name="Zurawski G."/>
            <person name="Hatfield G.W."/>
        </authorList>
    </citation>
    <scope>PRELIMINARY NUCLEOTIDE SEQUENCE [GENOMIC DNA] OF 1-81</scope>
    <source>
        <strain>K12</strain>
    </source>
</reference>
<reference key="8">
    <citation type="journal article" date="1992" name="J. Mol. Biol.">
        <title>DNA topology-mediated regulation of transcription initiation from the tandem promoters of the ilvGMEDA operon of Escherichia coli.</title>
        <authorList>
            <person name="Pagel J.M."/>
            <person name="Winkelman J.W."/>
            <person name="Adams C.W."/>
            <person name="Hatfield G.W."/>
        </authorList>
    </citation>
    <scope>NUCLEOTIDE SEQUENCE [GENOMIC DNA] OF 1-34</scope>
</reference>
<reference key="9">
    <citation type="journal article" date="1988" name="J. Biochem.">
        <title>Branched-chain amino acid aminotransferase of Escherichia coli: overproduction and properties.</title>
        <authorList>
            <person name="Inoue K."/>
            <person name="Kuramitsu S."/>
            <person name="Aki K."/>
            <person name="Watanabe Y."/>
            <person name="Takagi T."/>
            <person name="Nishigai M."/>
            <person name="Ikaiu A."/>
            <person name="Kagamiyama H."/>
        </authorList>
    </citation>
    <scope>PYRIDOXAL PHOSPHATE AT LYS-160</scope>
</reference>
<reference key="10">
    <citation type="journal article" date="1997" name="Electrophoresis">
        <title>Escherichia coli proteome analysis using the gene-protein database.</title>
        <authorList>
            <person name="VanBogelen R.A."/>
            <person name="Abshire K.Z."/>
            <person name="Moldover B."/>
            <person name="Olson E.R."/>
            <person name="Neidhardt F.C."/>
        </authorList>
    </citation>
    <scope>IDENTIFICATION BY 2D-GEL</scope>
</reference>
<reference key="11">
    <citation type="journal article" date="1997" name="J. Biochem.">
        <title>Three-dimensional structure of Escherichia coli branched-chain amino acid aminotransferase at 2.5-A resolution.</title>
        <authorList>
            <person name="Okada K."/>
            <person name="Hirotsu K."/>
            <person name="Sato M."/>
            <person name="Hyashi H."/>
            <person name="Kagamiyama H."/>
        </authorList>
    </citation>
    <scope>X-RAY CRYSTALLOGRAPHY (2.5 ANGSTROMS)</scope>
</reference>
<name>ILVE_ECOLI</name>
<feature type="initiator methionine" description="Removed">
    <location>
        <position position="1"/>
    </location>
</feature>
<feature type="chain" id="PRO_0000103262" description="Branched-chain-amino-acid aminotransferase">
    <location>
        <begin position="2"/>
        <end position="309"/>
    </location>
</feature>
<feature type="modified residue" description="N6-(pyridoxal phosphate)lysine">
    <location>
        <position position="160"/>
    </location>
</feature>
<feature type="sequence conflict" description="In Ref. 3; AAA67573." evidence="1" ref="3">
    <original>A</original>
    <variation>R</variation>
    <location>
        <position position="151"/>
    </location>
</feature>
<feature type="strand" evidence="4">
    <location>
        <begin position="7"/>
        <end position="11"/>
    </location>
</feature>
<feature type="strand" evidence="4">
    <location>
        <begin position="14"/>
        <end position="17"/>
    </location>
</feature>
<feature type="helix" evidence="4">
    <location>
        <begin position="18"/>
        <end position="20"/>
    </location>
</feature>
<feature type="helix" evidence="4">
    <location>
        <begin position="28"/>
        <end position="32"/>
    </location>
</feature>
<feature type="strand" evidence="4">
    <location>
        <begin position="35"/>
        <end position="37"/>
    </location>
</feature>
<feature type="strand" evidence="4">
    <location>
        <begin position="40"/>
        <end position="43"/>
    </location>
</feature>
<feature type="strand" evidence="4">
    <location>
        <begin position="48"/>
        <end position="52"/>
    </location>
</feature>
<feature type="helix" evidence="4">
    <location>
        <begin position="54"/>
        <end position="68"/>
    </location>
</feature>
<feature type="helix" evidence="4">
    <location>
        <begin position="76"/>
        <end position="89"/>
    </location>
</feature>
<feature type="strand" evidence="4">
    <location>
        <begin position="93"/>
        <end position="103"/>
    </location>
</feature>
<feature type="strand" evidence="4">
    <location>
        <begin position="108"/>
        <end position="111"/>
    </location>
</feature>
<feature type="strand" evidence="4">
    <location>
        <begin position="118"/>
        <end position="125"/>
    </location>
</feature>
<feature type="helix" evidence="4">
    <location>
        <begin position="135"/>
        <end position="138"/>
    </location>
</feature>
<feature type="strand" evidence="4">
    <location>
        <begin position="140"/>
        <end position="144"/>
    </location>
</feature>
<feature type="turn" evidence="4">
    <location>
        <begin position="152"/>
        <end position="154"/>
    </location>
</feature>
<feature type="strand" evidence="3">
    <location>
        <begin position="157"/>
        <end position="159"/>
    </location>
</feature>
<feature type="helix" evidence="4">
    <location>
        <begin position="162"/>
        <end position="164"/>
    </location>
</feature>
<feature type="helix" evidence="4">
    <location>
        <begin position="165"/>
        <end position="177"/>
    </location>
</feature>
<feature type="strand" evidence="4">
    <location>
        <begin position="181"/>
        <end position="186"/>
    </location>
</feature>
<feature type="strand" evidence="4">
    <location>
        <begin position="190"/>
        <end position="195"/>
    </location>
</feature>
<feature type="strand" evidence="4">
    <location>
        <begin position="198"/>
        <end position="204"/>
    </location>
</feature>
<feature type="strand" evidence="4">
    <location>
        <begin position="207"/>
        <end position="210"/>
    </location>
</feature>
<feature type="helix" evidence="4">
    <location>
        <begin position="213"/>
        <end position="215"/>
    </location>
</feature>
<feature type="helix" evidence="4">
    <location>
        <begin position="221"/>
        <end position="232"/>
    </location>
</feature>
<feature type="strand" evidence="4">
    <location>
        <begin position="237"/>
        <end position="239"/>
    </location>
</feature>
<feature type="helix" evidence="4">
    <location>
        <begin position="246"/>
        <end position="249"/>
    </location>
</feature>
<feature type="strand" evidence="4">
    <location>
        <begin position="251"/>
        <end position="257"/>
    </location>
</feature>
<feature type="turn" evidence="4">
    <location>
        <begin position="258"/>
        <end position="260"/>
    </location>
</feature>
<feature type="strand" evidence="4">
    <location>
        <begin position="261"/>
        <end position="268"/>
    </location>
</feature>
<feature type="helix" evidence="2">
    <location>
        <begin position="274"/>
        <end position="276"/>
    </location>
</feature>
<feature type="helix" evidence="4">
    <location>
        <begin position="280"/>
        <end position="290"/>
    </location>
</feature>
<feature type="turn" evidence="4">
    <location>
        <begin position="291"/>
        <end position="294"/>
    </location>
</feature>
<feature type="strand" evidence="4">
    <location>
        <begin position="295"/>
        <end position="297"/>
    </location>
</feature>
<feature type="strand" evidence="4">
    <location>
        <begin position="304"/>
        <end position="306"/>
    </location>
</feature>